<sequence>MILITDSAQEHFAKLLSKQEDGTQIRVFVINPGTPTAECGVSYCPPDAVEATDTELKFDKLSAFVDELSAPYLQDAEIDFVTDNLGSQLTLKAPNAKMRKVSDDAPLIERVEYLLQAQINPQLASHGGKVSLMEITDEGYAILQFGGGCNGCSMVDVTLKEGIEKEMLAAFPELKGVRDLTEHQRGEHSFY</sequence>
<keyword id="KW-0004">4Fe-4S</keyword>
<keyword id="KW-0408">Iron</keyword>
<keyword id="KW-0411">Iron-sulfur</keyword>
<keyword id="KW-0479">Metal-binding</keyword>
<keyword id="KW-1185">Reference proteome</keyword>
<name>NFUA_ERWT9</name>
<gene>
    <name evidence="1" type="primary">nfuA</name>
    <name type="ordered locus">ETA_32280</name>
</gene>
<reference key="1">
    <citation type="journal article" date="2008" name="Environ. Microbiol.">
        <title>The genome of Erwinia tasmaniensis strain Et1/99, a non-pathogenic bacterium in the genus Erwinia.</title>
        <authorList>
            <person name="Kube M."/>
            <person name="Migdoll A.M."/>
            <person name="Mueller I."/>
            <person name="Kuhl H."/>
            <person name="Beck A."/>
            <person name="Reinhardt R."/>
            <person name="Geider K."/>
        </authorList>
    </citation>
    <scope>NUCLEOTIDE SEQUENCE [LARGE SCALE GENOMIC DNA]</scope>
    <source>
        <strain>DSM 17950 / CFBP 7177 / CIP 109463 / NCPPB 4357 / Et1/99</strain>
    </source>
</reference>
<evidence type="ECO:0000255" key="1">
    <source>
        <dbReference type="HAMAP-Rule" id="MF_01637"/>
    </source>
</evidence>
<comment type="function">
    <text evidence="1">Involved in iron-sulfur cluster biogenesis. Binds a 4Fe-4S cluster, can transfer this cluster to apoproteins, and thereby intervenes in the maturation of Fe/S proteins. Could also act as a scaffold/chaperone for damaged Fe/S proteins.</text>
</comment>
<comment type="cofactor">
    <cofactor evidence="1">
        <name>[4Fe-4S] cluster</name>
        <dbReference type="ChEBI" id="CHEBI:49883"/>
    </cofactor>
    <text evidence="1">Binds 1 [4Fe-4S] cluster per subunit. The cluster is presumably bound at the interface of two monomers.</text>
</comment>
<comment type="subunit">
    <text evidence="1">Homodimer.</text>
</comment>
<comment type="similarity">
    <text evidence="1">Belongs to the NfuA family.</text>
</comment>
<dbReference type="EMBL" id="CU468135">
    <property type="protein sequence ID" value="CAO98274.1"/>
    <property type="molecule type" value="Genomic_DNA"/>
</dbReference>
<dbReference type="RefSeq" id="WP_012442903.1">
    <property type="nucleotide sequence ID" value="NC_010694.1"/>
</dbReference>
<dbReference type="SMR" id="B2VJW0"/>
<dbReference type="STRING" id="465817.ETA_32280"/>
<dbReference type="GeneID" id="92235447"/>
<dbReference type="KEGG" id="eta:ETA_32280"/>
<dbReference type="eggNOG" id="COG0316">
    <property type="taxonomic scope" value="Bacteria"/>
</dbReference>
<dbReference type="eggNOG" id="COG0694">
    <property type="taxonomic scope" value="Bacteria"/>
</dbReference>
<dbReference type="HOGENOM" id="CLU_094569_0_0_6"/>
<dbReference type="OrthoDB" id="9785450at2"/>
<dbReference type="Proteomes" id="UP000001726">
    <property type="component" value="Chromosome"/>
</dbReference>
<dbReference type="GO" id="GO:0051539">
    <property type="term" value="F:4 iron, 4 sulfur cluster binding"/>
    <property type="evidence" value="ECO:0007669"/>
    <property type="project" value="UniProtKB-UniRule"/>
</dbReference>
<dbReference type="GO" id="GO:0005506">
    <property type="term" value="F:iron ion binding"/>
    <property type="evidence" value="ECO:0007669"/>
    <property type="project" value="InterPro"/>
</dbReference>
<dbReference type="GO" id="GO:0016226">
    <property type="term" value="P:iron-sulfur cluster assembly"/>
    <property type="evidence" value="ECO:0007669"/>
    <property type="project" value="UniProtKB-UniRule"/>
</dbReference>
<dbReference type="GO" id="GO:0051604">
    <property type="term" value="P:protein maturation"/>
    <property type="evidence" value="ECO:0007669"/>
    <property type="project" value="UniProtKB-UniRule"/>
</dbReference>
<dbReference type="FunFam" id="3.30.300.130:FF:000002">
    <property type="entry name" value="Fe/S biogenesis protein NfuA"/>
    <property type="match status" value="1"/>
</dbReference>
<dbReference type="Gene3D" id="3.30.300.130">
    <property type="entry name" value="Fe-S cluster assembly (FSCA)"/>
    <property type="match status" value="1"/>
</dbReference>
<dbReference type="Gene3D" id="2.60.300.12">
    <property type="entry name" value="HesB-like domain"/>
    <property type="match status" value="1"/>
</dbReference>
<dbReference type="HAMAP" id="MF_01637">
    <property type="entry name" value="Fe_S_biogen_NfuA"/>
    <property type="match status" value="1"/>
</dbReference>
<dbReference type="InterPro" id="IPR017726">
    <property type="entry name" value="Fe/S_biogenesis_protein_NfuA"/>
</dbReference>
<dbReference type="InterPro" id="IPR000361">
    <property type="entry name" value="FeS_biogenesis"/>
</dbReference>
<dbReference type="InterPro" id="IPR034904">
    <property type="entry name" value="FSCA_dom_sf"/>
</dbReference>
<dbReference type="InterPro" id="IPR035903">
    <property type="entry name" value="HesB-like_dom_sf"/>
</dbReference>
<dbReference type="InterPro" id="IPR001075">
    <property type="entry name" value="NIF_FeS_clus_asmbl_NifU_C"/>
</dbReference>
<dbReference type="NCBIfam" id="NF008392">
    <property type="entry name" value="PRK11190.1"/>
    <property type="match status" value="1"/>
</dbReference>
<dbReference type="NCBIfam" id="TIGR03341">
    <property type="entry name" value="YhgI_GntY"/>
    <property type="match status" value="1"/>
</dbReference>
<dbReference type="PANTHER" id="PTHR11178:SF51">
    <property type="entry name" value="FE_S BIOGENESIS PROTEIN NFUA"/>
    <property type="match status" value="1"/>
</dbReference>
<dbReference type="PANTHER" id="PTHR11178">
    <property type="entry name" value="IRON-SULFUR CLUSTER SCAFFOLD PROTEIN NFU-RELATED"/>
    <property type="match status" value="1"/>
</dbReference>
<dbReference type="Pfam" id="PF01521">
    <property type="entry name" value="Fe-S_biosyn"/>
    <property type="match status" value="1"/>
</dbReference>
<dbReference type="Pfam" id="PF01106">
    <property type="entry name" value="NifU"/>
    <property type="match status" value="1"/>
</dbReference>
<dbReference type="SUPFAM" id="SSF117916">
    <property type="entry name" value="Fe-S cluster assembly (FSCA) domain-like"/>
    <property type="match status" value="1"/>
</dbReference>
<dbReference type="SUPFAM" id="SSF89360">
    <property type="entry name" value="HesB-like domain"/>
    <property type="match status" value="1"/>
</dbReference>
<organism>
    <name type="scientific">Erwinia tasmaniensis (strain DSM 17950 / CFBP 7177 / CIP 109463 / NCPPB 4357 / Et1/99)</name>
    <dbReference type="NCBI Taxonomy" id="465817"/>
    <lineage>
        <taxon>Bacteria</taxon>
        <taxon>Pseudomonadati</taxon>
        <taxon>Pseudomonadota</taxon>
        <taxon>Gammaproteobacteria</taxon>
        <taxon>Enterobacterales</taxon>
        <taxon>Erwiniaceae</taxon>
        <taxon>Erwinia</taxon>
    </lineage>
</organism>
<feature type="chain" id="PRO_1000186753" description="Fe/S biogenesis protein NfuA">
    <location>
        <begin position="1"/>
        <end position="191"/>
    </location>
</feature>
<feature type="binding site" evidence="1">
    <location>
        <position position="149"/>
    </location>
    <ligand>
        <name>[4Fe-4S] cluster</name>
        <dbReference type="ChEBI" id="CHEBI:49883"/>
    </ligand>
</feature>
<feature type="binding site" evidence="1">
    <location>
        <position position="152"/>
    </location>
    <ligand>
        <name>[4Fe-4S] cluster</name>
        <dbReference type="ChEBI" id="CHEBI:49883"/>
    </ligand>
</feature>
<protein>
    <recommendedName>
        <fullName evidence="1">Fe/S biogenesis protein NfuA</fullName>
    </recommendedName>
</protein>
<proteinExistence type="inferred from homology"/>
<accession>B2VJW0</accession>